<protein>
    <recommendedName>
        <fullName evidence="5">Ubiquitin carboxyl-terminal hydrolase 17-like protein B</fullName>
        <shortName evidence="5">USP17-B</shortName>
        <ecNumber evidence="3">3.4.19.12</ecNumber>
    </recommendedName>
    <alternativeName>
        <fullName evidence="4">Deubiquitinating enzyme 1A</fullName>
    </alternativeName>
</protein>
<gene>
    <name evidence="9" type="primary">Usp17lb</name>
    <name evidence="4" type="synonym">Dub1a</name>
</gene>
<sequence length="468" mass="52114">MVVALSFPEADPAMSPPSAPELHQDEAQVVEELAANGKHSLSWESPQGPGCGLQNTGNSCYLNAALQCLTHTPPLADYMLSQEHSQTCCSPEGCKMCAMEAHVTQSLLHTHSGDVMKPSQNLTSAFHKRKQEDAHEFLMFTLETMHESCLQVHRQSEPTSEDSSPIHDIFGGWWRSQIKCHHCQGTSYSYDPFLDIPLDISSVQSVKQALQDTEKAEELCGENSYYCGRCRQKKPASKTLKLYSAPKVLMLVLKRFSGSMGKKLDRKVSYPEFLDLKPYLSQPTGGPLPYALYAVLVHEGATCHSGHYFCCVKAGHGKWYKMDDTKVTSCDVTSVLNENAYVLFYVQQNDLKKGSINMPEGRIHEVLDAKYQLKKSGEKKHNKSPCTEDAGEPCENREKRSSKETSLGEGKVLQEQDHQKAGQKQENTKLTPQEQNHEKGGQNLRNTEGELDRLSGAIVVYQPICTAN</sequence>
<keyword id="KW-0025">Alternative splicing</keyword>
<keyword id="KW-0378">Hydrolase</keyword>
<keyword id="KW-0645">Protease</keyword>
<keyword id="KW-1185">Reference proteome</keyword>
<keyword id="KW-0788">Thiol protease</keyword>
<keyword id="KW-0832">Ubl conjugation</keyword>
<keyword id="KW-0833">Ubl conjugation pathway</keyword>
<organism evidence="10">
    <name type="scientific">Mus musculus</name>
    <name type="common">Mouse</name>
    <dbReference type="NCBI Taxonomy" id="10090"/>
    <lineage>
        <taxon>Eukaryota</taxon>
        <taxon>Metazoa</taxon>
        <taxon>Chordata</taxon>
        <taxon>Craniata</taxon>
        <taxon>Vertebrata</taxon>
        <taxon>Euteleostomi</taxon>
        <taxon>Mammalia</taxon>
        <taxon>Eutheria</taxon>
        <taxon>Euarchontoglires</taxon>
        <taxon>Glires</taxon>
        <taxon>Rodentia</taxon>
        <taxon>Myomorpha</taxon>
        <taxon>Muroidea</taxon>
        <taxon>Muridae</taxon>
        <taxon>Murinae</taxon>
        <taxon>Mus</taxon>
        <taxon>Mus</taxon>
    </lineage>
</organism>
<comment type="function">
    <text evidence="3">Deubiquitinating enzyme that removes conjugated ubiquitin from specific proteins to regulate different cellular processes.</text>
</comment>
<comment type="catalytic activity">
    <reaction evidence="3">
        <text>Thiol-dependent hydrolysis of ester, thioester, amide, peptide and isopeptide bonds formed by the C-terminal Gly of ubiquitin (a 76-residue protein attached to proteins as an intracellular targeting signal).</text>
        <dbReference type="EC" id="3.4.19.12"/>
    </reaction>
</comment>
<comment type="activity regulation">
    <text evidence="3">Inhibited by ubiquitin aldehyde.</text>
</comment>
<comment type="alternative products">
    <event type="alternative splicing"/>
    <isoform>
        <id>E9Q9U0-1</id>
        <name>1</name>
        <sequence type="displayed"/>
    </isoform>
    <isoform>
        <id>E9Q9U0-2</id>
        <name>2</name>
        <sequence type="described" ref="VSP_058560"/>
    </isoform>
</comment>
<comment type="tissue specificity">
    <text evidence="3">Detected in brain, heart, liver, lung, kidney, ovary and spleen.</text>
</comment>
<comment type="induction">
    <text evidence="3">Up-regulated by interleukin-3 (IL-3) in the B-lymphocyte cell line Ba/F3. May also be up-regulated in response to JAK2.</text>
</comment>
<comment type="PTM">
    <text evidence="3">Ubiquitinated.</text>
</comment>
<comment type="miscellaneous">
    <molecule>Isoform 2</molecule>
    <text evidence="5">May be due to competing acceptor splice site.</text>
</comment>
<comment type="similarity">
    <text evidence="5">Belongs to the peptidase C19 family. USP17 subfamily.</text>
</comment>
<reference evidence="8" key="1">
    <citation type="journal article" date="2004" name="J. Biol. Chem.">
        <title>DUB-1A, a novel deubiquitinating enzyme subfamily member, is polyubiquitinated and cytokine-inducible in B-lymphocytes.</title>
        <authorList>
            <person name="Baek K.H."/>
            <person name="Kim M.S."/>
            <person name="Kim Y.S."/>
            <person name="Shin J.M."/>
            <person name="Choi H.K."/>
        </authorList>
    </citation>
    <scope>NUCLEOTIDE SEQUENCE [MRNA] (ISOFORM 1)</scope>
    <scope>FUNCTION</scope>
    <scope>CATALYTIC ACTIVITY</scope>
    <scope>ACTIVE SITE</scope>
    <scope>ACTIVITY REGULATION</scope>
    <scope>TISSUE SPECIFICITY</scope>
    <scope>INDUCTION</scope>
    <scope>UBIQUITINATION</scope>
    <scope>MUTAGENESIS OF CYS-60</scope>
</reference>
<reference evidence="10" key="2">
    <citation type="journal article" date="2009" name="PLoS Biol.">
        <title>Lineage-specific biology revealed by a finished genome assembly of the mouse.</title>
        <authorList>
            <person name="Church D.M."/>
            <person name="Goodstadt L."/>
            <person name="Hillier L.W."/>
            <person name="Zody M.C."/>
            <person name="Goldstein S."/>
            <person name="She X."/>
            <person name="Bult C.J."/>
            <person name="Agarwala R."/>
            <person name="Cherry J.L."/>
            <person name="DiCuccio M."/>
            <person name="Hlavina W."/>
            <person name="Kapustin Y."/>
            <person name="Meric P."/>
            <person name="Maglott D."/>
            <person name="Birtle Z."/>
            <person name="Marques A.C."/>
            <person name="Graves T."/>
            <person name="Zhou S."/>
            <person name="Teague B."/>
            <person name="Potamousis K."/>
            <person name="Churas C."/>
            <person name="Place M."/>
            <person name="Herschleb J."/>
            <person name="Runnheim R."/>
            <person name="Forrest D."/>
            <person name="Amos-Landgraf J."/>
            <person name="Schwartz D.C."/>
            <person name="Cheng Z."/>
            <person name="Lindblad-Toh K."/>
            <person name="Eichler E.E."/>
            <person name="Ponting C.P."/>
        </authorList>
    </citation>
    <scope>NUCLEOTIDE SEQUENCE [LARGE SCALE GENOMIC DNA]</scope>
    <source>
        <strain evidence="10">C57BL/6J</strain>
    </source>
</reference>
<reference evidence="7" key="3">
    <citation type="journal article" date="2004" name="Genome Res.">
        <title>The status, quality, and expansion of the NIH full-length cDNA project: the Mammalian Gene Collection (MGC).</title>
        <authorList>
            <consortium name="The MGC Project Team"/>
        </authorList>
    </citation>
    <scope>NUCLEOTIDE SEQUENCE [LARGE SCALE MRNA] (ISOFORM 2)</scope>
    <source>
        <tissue evidence="7">Brain</tissue>
    </source>
</reference>
<accession>E9Q9U0</accession>
<accession>B7ZN74</accession>
<accession>E9QMF1</accession>
<accession>Q6X3X0</accession>
<proteinExistence type="evidence at protein level"/>
<name>U17PB_MOUSE</name>
<dbReference type="EC" id="3.4.19.12" evidence="3"/>
<dbReference type="EMBL" id="AY257250">
    <property type="protein sequence ID" value="AAP81046.1"/>
    <property type="molecule type" value="mRNA"/>
</dbReference>
<dbReference type="EMBL" id="AC110621">
    <property type="status" value="NOT_ANNOTATED_CDS"/>
    <property type="molecule type" value="Genomic_DNA"/>
</dbReference>
<dbReference type="EMBL" id="BC137942">
    <property type="protein sequence ID" value="AAI37943.1"/>
    <property type="molecule type" value="mRNA"/>
</dbReference>
<dbReference type="EMBL" id="BC145058">
    <property type="protein sequence ID" value="AAI45059.1"/>
    <property type="molecule type" value="mRNA"/>
</dbReference>
<dbReference type="CCDS" id="CCDS21628.1">
    <molecule id="E9Q9U0-1"/>
</dbReference>
<dbReference type="CCDS" id="CCDS90298.1">
    <molecule id="E9Q9U0-2"/>
</dbReference>
<dbReference type="RefSeq" id="NP_001345851.1">
    <molecule id="E9Q9U0-2"/>
    <property type="nucleotide sequence ID" value="NM_001358922.1"/>
</dbReference>
<dbReference type="RefSeq" id="NP_958811.2">
    <molecule id="E9Q9U0-1"/>
    <property type="nucleotide sequence ID" value="NM_201409.3"/>
</dbReference>
<dbReference type="RefSeq" id="XP_011240140.1">
    <property type="nucleotide sequence ID" value="XM_011241838.1"/>
</dbReference>
<dbReference type="SMR" id="E9Q9U0"/>
<dbReference type="FunCoup" id="E9Q9U0">
    <property type="interactions" value="208"/>
</dbReference>
<dbReference type="STRING" id="10090.ENSMUSP00000075822"/>
<dbReference type="MEROPS" id="C19.085"/>
<dbReference type="iPTMnet" id="E9Q9U0"/>
<dbReference type="PhosphoSitePlus" id="E9Q9U0"/>
<dbReference type="PaxDb" id="10090-ENSMUSP00000075822"/>
<dbReference type="ProteomicsDB" id="298053">
    <molecule id="E9Q9U0-1"/>
</dbReference>
<dbReference type="ProteomicsDB" id="298054">
    <molecule id="E9Q9U0-2"/>
</dbReference>
<dbReference type="DNASU" id="381944"/>
<dbReference type="Ensembl" id="ENSMUST00000076501.2">
    <molecule id="E9Q9U0-1"/>
    <property type="protein sequence ID" value="ENSMUSP00000075822.2"/>
    <property type="gene ID" value="ENSMUSG00000062369.3"/>
</dbReference>
<dbReference type="Ensembl" id="ENSMUST00000106814.3">
    <molecule id="E9Q9U0-2"/>
    <property type="protein sequence ID" value="ENSMUSP00000102427.3"/>
    <property type="gene ID" value="ENSMUSG00000062369.3"/>
</dbReference>
<dbReference type="GeneID" id="381944"/>
<dbReference type="KEGG" id="mmu:381944"/>
<dbReference type="UCSC" id="uc009iwy.1">
    <molecule id="E9Q9U0-1"/>
    <property type="organism name" value="mouse"/>
</dbReference>
<dbReference type="AGR" id="MGI:3051498"/>
<dbReference type="CTD" id="381944"/>
<dbReference type="MGI" id="MGI:3051498">
    <property type="gene designation" value="Usp17lb"/>
</dbReference>
<dbReference type="VEuPathDB" id="HostDB:ENSMUSG00000062369"/>
<dbReference type="eggNOG" id="KOG1865">
    <property type="taxonomic scope" value="Eukaryota"/>
</dbReference>
<dbReference type="GeneTree" id="ENSGT00940000162665"/>
<dbReference type="HOGENOM" id="CLU_008279_10_0_1"/>
<dbReference type="InParanoid" id="E9Q9U0"/>
<dbReference type="OMA" id="CQEEFQF"/>
<dbReference type="OrthoDB" id="83644at9989"/>
<dbReference type="PhylomeDB" id="E9Q9U0"/>
<dbReference type="TreeFam" id="TF315281"/>
<dbReference type="Reactome" id="R-MMU-5689880">
    <property type="pathway name" value="Ub-specific processing proteases"/>
</dbReference>
<dbReference type="Reactome" id="R-MMU-9648002">
    <property type="pathway name" value="RAS processing"/>
</dbReference>
<dbReference type="BioGRID-ORCS" id="381944">
    <property type="hits" value="2 hits in 76 CRISPR screens"/>
</dbReference>
<dbReference type="PRO" id="PR:E9Q9U0"/>
<dbReference type="Proteomes" id="UP000000589">
    <property type="component" value="Chromosome 7"/>
</dbReference>
<dbReference type="RNAct" id="E9Q9U0">
    <property type="molecule type" value="protein"/>
</dbReference>
<dbReference type="Bgee" id="ENSMUSG00000062369">
    <property type="expression patterns" value="Expressed in mesodermal cell in embryo and 3 other cell types or tissues"/>
</dbReference>
<dbReference type="GO" id="GO:0004843">
    <property type="term" value="F:cysteine-type deubiquitinase activity"/>
    <property type="evidence" value="ECO:0000314"/>
    <property type="project" value="MGI"/>
</dbReference>
<dbReference type="GO" id="GO:0016579">
    <property type="term" value="P:protein deubiquitination"/>
    <property type="evidence" value="ECO:0000314"/>
    <property type="project" value="MGI"/>
</dbReference>
<dbReference type="GO" id="GO:0006508">
    <property type="term" value="P:proteolysis"/>
    <property type="evidence" value="ECO:0007669"/>
    <property type="project" value="UniProtKB-KW"/>
</dbReference>
<dbReference type="CDD" id="cd02661">
    <property type="entry name" value="Peptidase_C19E"/>
    <property type="match status" value="1"/>
</dbReference>
<dbReference type="FunFam" id="3.90.70.10:FF:000197">
    <property type="entry name" value="Ubiquitin carboxyl-terminal hydrolase 17-like protein E"/>
    <property type="match status" value="1"/>
</dbReference>
<dbReference type="Gene3D" id="3.90.70.10">
    <property type="entry name" value="Cysteine proteinases"/>
    <property type="match status" value="1"/>
</dbReference>
<dbReference type="InterPro" id="IPR038765">
    <property type="entry name" value="Papain-like_cys_pep_sf"/>
</dbReference>
<dbReference type="InterPro" id="IPR050164">
    <property type="entry name" value="Peptidase_C19"/>
</dbReference>
<dbReference type="InterPro" id="IPR001394">
    <property type="entry name" value="Peptidase_C19_UCH"/>
</dbReference>
<dbReference type="InterPro" id="IPR018200">
    <property type="entry name" value="USP_CS"/>
</dbReference>
<dbReference type="InterPro" id="IPR028889">
    <property type="entry name" value="USP_dom"/>
</dbReference>
<dbReference type="PANTHER" id="PTHR24006:SF651">
    <property type="entry name" value="INACTIVE UBIQUITIN CARBOXYL-TERMINAL HYDROLASE 17-LIKE PROTEIN 4-RELATED"/>
    <property type="match status" value="1"/>
</dbReference>
<dbReference type="PANTHER" id="PTHR24006">
    <property type="entry name" value="UBIQUITIN CARBOXYL-TERMINAL HYDROLASE"/>
    <property type="match status" value="1"/>
</dbReference>
<dbReference type="Pfam" id="PF00443">
    <property type="entry name" value="UCH"/>
    <property type="match status" value="1"/>
</dbReference>
<dbReference type="SUPFAM" id="SSF54001">
    <property type="entry name" value="Cysteine proteinases"/>
    <property type="match status" value="1"/>
</dbReference>
<dbReference type="PROSITE" id="PS00972">
    <property type="entry name" value="USP_1"/>
    <property type="match status" value="1"/>
</dbReference>
<dbReference type="PROSITE" id="PS00973">
    <property type="entry name" value="USP_2"/>
    <property type="match status" value="1"/>
</dbReference>
<dbReference type="PROSITE" id="PS50235">
    <property type="entry name" value="USP_3"/>
    <property type="match status" value="1"/>
</dbReference>
<feature type="chain" id="PRO_0000437666" description="Ubiquitin carboxyl-terminal hydrolase 17-like protein B">
    <location>
        <begin position="1"/>
        <end position="468"/>
    </location>
</feature>
<feature type="domain" description="USP" evidence="1">
    <location>
        <begin position="51"/>
        <end position="348"/>
    </location>
</feature>
<feature type="region of interest" description="Disordered" evidence="2">
    <location>
        <begin position="1"/>
        <end position="20"/>
    </location>
</feature>
<feature type="region of interest" description="Disordered" evidence="2">
    <location>
        <begin position="374"/>
        <end position="449"/>
    </location>
</feature>
<feature type="compositionally biased region" description="Basic and acidic residues" evidence="2">
    <location>
        <begin position="394"/>
        <end position="403"/>
    </location>
</feature>
<feature type="compositionally biased region" description="Polar residues" evidence="2">
    <location>
        <begin position="422"/>
        <end position="434"/>
    </location>
</feature>
<feature type="active site" description="Nucleophile" evidence="1 6">
    <location>
        <position position="60"/>
    </location>
</feature>
<feature type="active site" description="Proton acceptor" evidence="1">
    <location>
        <position position="307"/>
    </location>
</feature>
<feature type="splice variant" id="VSP_058560" description="In isoform 2.">
    <location>
        <position position="10"/>
    </location>
</feature>
<feature type="mutagenesis site" description="Loss of deubiquitinating activity." evidence="3">
    <original>C</original>
    <variation>S</variation>
    <location>
        <position position="60"/>
    </location>
</feature>
<feature type="sequence conflict" description="In Ref. 3; AAI37943/AAI45059." evidence="5" ref="3">
    <original>N</original>
    <variation>I</variation>
    <location>
        <position position="121"/>
    </location>
</feature>
<feature type="sequence conflict" description="In Ref. 1; AAP81046." evidence="5" ref="1">
    <location>
        <position position="131"/>
    </location>
</feature>
<feature type="sequence conflict" description="In Ref. 3; AAI37943/AAI45059." evidence="5" ref="3">
    <original>K</original>
    <variation>E</variation>
    <location>
        <position position="370"/>
    </location>
</feature>
<feature type="sequence conflict" description="In Ref. 3; AAI37943/AAI45059." evidence="5" ref="3">
    <original>E</original>
    <variation>Q</variation>
    <location>
        <position position="438"/>
    </location>
</feature>
<feature type="sequence conflict" description="In Ref. 1; AAP81046." evidence="5" ref="1">
    <original>LSGA</original>
    <variation>PS</variation>
    <location>
        <begin position="454"/>
        <end position="457"/>
    </location>
</feature>
<evidence type="ECO:0000255" key="1">
    <source>
        <dbReference type="PROSITE-ProRule" id="PRU01035"/>
    </source>
</evidence>
<evidence type="ECO:0000256" key="2">
    <source>
        <dbReference type="SAM" id="MobiDB-lite"/>
    </source>
</evidence>
<evidence type="ECO:0000269" key="3">
    <source>
    </source>
</evidence>
<evidence type="ECO:0000303" key="4">
    <source>
    </source>
</evidence>
<evidence type="ECO:0000305" key="5"/>
<evidence type="ECO:0000305" key="6">
    <source>
    </source>
</evidence>
<evidence type="ECO:0000312" key="7">
    <source>
        <dbReference type="EMBL" id="AAI45059.1"/>
    </source>
</evidence>
<evidence type="ECO:0000312" key="8">
    <source>
        <dbReference type="EMBL" id="AAP81046.1"/>
    </source>
</evidence>
<evidence type="ECO:0000312" key="9">
    <source>
        <dbReference type="MGI" id="MGI:3051498"/>
    </source>
</evidence>
<evidence type="ECO:0000312" key="10">
    <source>
        <dbReference type="Proteomes" id="UP000000589"/>
    </source>
</evidence>